<proteinExistence type="inferred from homology"/>
<accession>Q8Y7Q1</accession>
<reference key="1">
    <citation type="journal article" date="2001" name="Science">
        <title>Comparative genomics of Listeria species.</title>
        <authorList>
            <person name="Glaser P."/>
            <person name="Frangeul L."/>
            <person name="Buchrieser C."/>
            <person name="Rusniok C."/>
            <person name="Amend A."/>
            <person name="Baquero F."/>
            <person name="Berche P."/>
            <person name="Bloecker H."/>
            <person name="Brandt P."/>
            <person name="Chakraborty T."/>
            <person name="Charbit A."/>
            <person name="Chetouani F."/>
            <person name="Couve E."/>
            <person name="de Daruvar A."/>
            <person name="Dehoux P."/>
            <person name="Domann E."/>
            <person name="Dominguez-Bernal G."/>
            <person name="Duchaud E."/>
            <person name="Durant L."/>
            <person name="Dussurget O."/>
            <person name="Entian K.-D."/>
            <person name="Fsihi H."/>
            <person name="Garcia-del Portillo F."/>
            <person name="Garrido P."/>
            <person name="Gautier L."/>
            <person name="Goebel W."/>
            <person name="Gomez-Lopez N."/>
            <person name="Hain T."/>
            <person name="Hauf J."/>
            <person name="Jackson D."/>
            <person name="Jones L.-M."/>
            <person name="Kaerst U."/>
            <person name="Kreft J."/>
            <person name="Kuhn M."/>
            <person name="Kunst F."/>
            <person name="Kurapkat G."/>
            <person name="Madueno E."/>
            <person name="Maitournam A."/>
            <person name="Mata Vicente J."/>
            <person name="Ng E."/>
            <person name="Nedjari H."/>
            <person name="Nordsiek G."/>
            <person name="Novella S."/>
            <person name="de Pablos B."/>
            <person name="Perez-Diaz J.-C."/>
            <person name="Purcell R."/>
            <person name="Remmel B."/>
            <person name="Rose M."/>
            <person name="Schlueter T."/>
            <person name="Simoes N."/>
            <person name="Tierrez A."/>
            <person name="Vazquez-Boland J.-A."/>
            <person name="Voss H."/>
            <person name="Wehland J."/>
            <person name="Cossart P."/>
        </authorList>
    </citation>
    <scope>NUCLEOTIDE SEQUENCE [LARGE SCALE GENOMIC DNA]</scope>
    <source>
        <strain>ATCC BAA-679 / EGD-e</strain>
    </source>
</reference>
<comment type="catalytic activity">
    <reaction evidence="1">
        <text>tRNA(Phe) + L-phenylalanine + ATP = L-phenylalanyl-tRNA(Phe) + AMP + diphosphate + H(+)</text>
        <dbReference type="Rhea" id="RHEA:19413"/>
        <dbReference type="Rhea" id="RHEA-COMP:9668"/>
        <dbReference type="Rhea" id="RHEA-COMP:9699"/>
        <dbReference type="ChEBI" id="CHEBI:15378"/>
        <dbReference type="ChEBI" id="CHEBI:30616"/>
        <dbReference type="ChEBI" id="CHEBI:33019"/>
        <dbReference type="ChEBI" id="CHEBI:58095"/>
        <dbReference type="ChEBI" id="CHEBI:78442"/>
        <dbReference type="ChEBI" id="CHEBI:78531"/>
        <dbReference type="ChEBI" id="CHEBI:456215"/>
        <dbReference type="EC" id="6.1.1.20"/>
    </reaction>
</comment>
<comment type="cofactor">
    <cofactor evidence="1">
        <name>Mg(2+)</name>
        <dbReference type="ChEBI" id="CHEBI:18420"/>
    </cofactor>
    <text evidence="1">Binds 2 magnesium ions per tetramer.</text>
</comment>
<comment type="subunit">
    <text evidence="1">Tetramer of two alpha and two beta subunits.</text>
</comment>
<comment type="subcellular location">
    <subcellularLocation>
        <location evidence="1">Cytoplasm</location>
    </subcellularLocation>
</comment>
<comment type="similarity">
    <text evidence="1">Belongs to the phenylalanyl-tRNA synthetase beta subunit family. Type 1 subfamily.</text>
</comment>
<sequence>MLVSYNWVKEFFQDFPLTAEELGEAITRTGIEIEGVEELSASLKNVVVGEVLSCERHPDAEKLNKCLVQTDEAEPVQIICGAPNVAAGQKVIVAKVGARLPGGLKIKRAKLRGEVSEGMICSLAELGFESKVVPKAYAEGIYVLPAHVETGVNAITLLGLDDAILDMAITPNRADALSMKGVAHEVGAIIHQKPAQPTEPDVSEKGKAEDFISVEVENPAETPYYAIKMVENIEIKESPLWLQTKLMKAGIRPHNNVVDVTNYINLLYGQPLHSFDYDKIGSKKIVVRSAKEQEEITTLDGEKRTLQAGHTVITNGVEPIAIAGVMGGEFSEVTENTTTVALEGAIFSSSSIGKASRELYLRTEASIRYDKGSDAWKVEKALAHGGALIAELSGGTLVGGVVEVDNREKAVNKIETSLTRINRILGTAITLTEIETIFDRLGFVLEVKNDALIIEVPTRRWDITIEADILEEVARIYGYDEIPVTLPATSTTGGLSDSQKARRVMRAYLEGAGLNQALTYSLTSKKDATRLALSDEKTVALSMPMSEEHSHLRTSIVPQLIRSASYNIARKNMDVALYEMGTVFYATEGDNLPIEQEHLAGLITGNWHIADWQKTPKPVDFFVLKGIVEGLVNKLGIKSELHWKQTEKEELHPGRTASLVLEGQEIGYLGALHPAVEANYDLKETYVFEINVAALLDATKEKVVYHPIPRYPEMTRDLALLVDKDTNHAAISQVIKEHGGKLLVDIELFDIFEGESLGENKKSLAYTLTFLDSERTLVEEDVQKATNKVVEALQEKLNAIIR</sequence>
<dbReference type="EC" id="6.1.1.20" evidence="1"/>
<dbReference type="EMBL" id="AL591978">
    <property type="protein sequence ID" value="CAC99300.1"/>
    <property type="molecule type" value="Genomic_DNA"/>
</dbReference>
<dbReference type="PIR" id="AF1227">
    <property type="entry name" value="AF1227"/>
</dbReference>
<dbReference type="RefSeq" id="NP_464747.1">
    <property type="nucleotide sequence ID" value="NC_003210.1"/>
</dbReference>
<dbReference type="RefSeq" id="WP_003721620.1">
    <property type="nucleotide sequence ID" value="NZ_CP149495.1"/>
</dbReference>
<dbReference type="SMR" id="Q8Y7Q1"/>
<dbReference type="STRING" id="169963.gene:17593878"/>
<dbReference type="PaxDb" id="169963-lmo1222"/>
<dbReference type="EnsemblBacteria" id="CAC99300">
    <property type="protein sequence ID" value="CAC99300"/>
    <property type="gene ID" value="CAC99300"/>
</dbReference>
<dbReference type="GeneID" id="986682"/>
<dbReference type="KEGG" id="lmo:lmo1222"/>
<dbReference type="PATRIC" id="fig|169963.11.peg.1253"/>
<dbReference type="eggNOG" id="COG0072">
    <property type="taxonomic scope" value="Bacteria"/>
</dbReference>
<dbReference type="eggNOG" id="COG0073">
    <property type="taxonomic scope" value="Bacteria"/>
</dbReference>
<dbReference type="HOGENOM" id="CLU_016891_0_0_9"/>
<dbReference type="OrthoDB" id="9805455at2"/>
<dbReference type="PhylomeDB" id="Q8Y7Q1"/>
<dbReference type="BioCyc" id="LMON169963:LMO1222-MONOMER"/>
<dbReference type="Proteomes" id="UP000000817">
    <property type="component" value="Chromosome"/>
</dbReference>
<dbReference type="GO" id="GO:0009328">
    <property type="term" value="C:phenylalanine-tRNA ligase complex"/>
    <property type="evidence" value="ECO:0000318"/>
    <property type="project" value="GO_Central"/>
</dbReference>
<dbReference type="GO" id="GO:0005524">
    <property type="term" value="F:ATP binding"/>
    <property type="evidence" value="ECO:0007669"/>
    <property type="project" value="UniProtKB-UniRule"/>
</dbReference>
<dbReference type="GO" id="GO:0140096">
    <property type="term" value="F:catalytic activity, acting on a protein"/>
    <property type="evidence" value="ECO:0007669"/>
    <property type="project" value="UniProtKB-ARBA"/>
</dbReference>
<dbReference type="GO" id="GO:0000287">
    <property type="term" value="F:magnesium ion binding"/>
    <property type="evidence" value="ECO:0007669"/>
    <property type="project" value="UniProtKB-UniRule"/>
</dbReference>
<dbReference type="GO" id="GO:0004826">
    <property type="term" value="F:phenylalanine-tRNA ligase activity"/>
    <property type="evidence" value="ECO:0007669"/>
    <property type="project" value="UniProtKB-UniRule"/>
</dbReference>
<dbReference type="GO" id="GO:0016740">
    <property type="term" value="F:transferase activity"/>
    <property type="evidence" value="ECO:0007669"/>
    <property type="project" value="UniProtKB-ARBA"/>
</dbReference>
<dbReference type="GO" id="GO:0000049">
    <property type="term" value="F:tRNA binding"/>
    <property type="evidence" value="ECO:0007669"/>
    <property type="project" value="UniProtKB-KW"/>
</dbReference>
<dbReference type="GO" id="GO:0006432">
    <property type="term" value="P:phenylalanyl-tRNA aminoacylation"/>
    <property type="evidence" value="ECO:0000318"/>
    <property type="project" value="GO_Central"/>
</dbReference>
<dbReference type="CDD" id="cd00769">
    <property type="entry name" value="PheRS_beta_core"/>
    <property type="match status" value="1"/>
</dbReference>
<dbReference type="CDD" id="cd02796">
    <property type="entry name" value="tRNA_bind_bactPheRS"/>
    <property type="match status" value="1"/>
</dbReference>
<dbReference type="FunFam" id="2.40.50.140:FF:000045">
    <property type="entry name" value="Phenylalanine--tRNA ligase beta subunit"/>
    <property type="match status" value="1"/>
</dbReference>
<dbReference type="FunFam" id="3.30.56.10:FF:000002">
    <property type="entry name" value="Phenylalanine--tRNA ligase beta subunit"/>
    <property type="match status" value="1"/>
</dbReference>
<dbReference type="FunFam" id="3.30.70.380:FF:000001">
    <property type="entry name" value="Phenylalanine--tRNA ligase beta subunit"/>
    <property type="match status" value="1"/>
</dbReference>
<dbReference type="FunFam" id="3.30.930.10:FF:000022">
    <property type="entry name" value="Phenylalanine--tRNA ligase beta subunit"/>
    <property type="match status" value="1"/>
</dbReference>
<dbReference type="FunFam" id="3.50.40.10:FF:000001">
    <property type="entry name" value="Phenylalanine--tRNA ligase beta subunit"/>
    <property type="match status" value="1"/>
</dbReference>
<dbReference type="Gene3D" id="3.30.56.10">
    <property type="match status" value="2"/>
</dbReference>
<dbReference type="Gene3D" id="3.30.930.10">
    <property type="entry name" value="Bira Bifunctional Protein, Domain 2"/>
    <property type="match status" value="1"/>
</dbReference>
<dbReference type="Gene3D" id="3.30.70.380">
    <property type="entry name" value="Ferrodoxin-fold anticodon-binding domain"/>
    <property type="match status" value="1"/>
</dbReference>
<dbReference type="Gene3D" id="2.40.50.140">
    <property type="entry name" value="Nucleic acid-binding proteins"/>
    <property type="match status" value="1"/>
</dbReference>
<dbReference type="Gene3D" id="3.50.40.10">
    <property type="entry name" value="Phenylalanyl-trna Synthetase, Chain B, domain 3"/>
    <property type="match status" value="1"/>
</dbReference>
<dbReference type="HAMAP" id="MF_00283">
    <property type="entry name" value="Phe_tRNA_synth_beta1"/>
    <property type="match status" value="1"/>
</dbReference>
<dbReference type="InterPro" id="IPR045864">
    <property type="entry name" value="aa-tRNA-synth_II/BPL/LPL"/>
</dbReference>
<dbReference type="InterPro" id="IPR005146">
    <property type="entry name" value="B3/B4_tRNA-bd"/>
</dbReference>
<dbReference type="InterPro" id="IPR009061">
    <property type="entry name" value="DNA-bd_dom_put_sf"/>
</dbReference>
<dbReference type="InterPro" id="IPR005121">
    <property type="entry name" value="Fdx_antiC-bd"/>
</dbReference>
<dbReference type="InterPro" id="IPR036690">
    <property type="entry name" value="Fdx_antiC-bd_sf"/>
</dbReference>
<dbReference type="InterPro" id="IPR012340">
    <property type="entry name" value="NA-bd_OB-fold"/>
</dbReference>
<dbReference type="InterPro" id="IPR045060">
    <property type="entry name" value="Phe-tRNA-ligase_IIc_bsu"/>
</dbReference>
<dbReference type="InterPro" id="IPR004532">
    <property type="entry name" value="Phe-tRNA-ligase_IIc_bsu_bact"/>
</dbReference>
<dbReference type="InterPro" id="IPR020825">
    <property type="entry name" value="Phe-tRNA_synthase-like_B3/B4"/>
</dbReference>
<dbReference type="InterPro" id="IPR041616">
    <property type="entry name" value="PheRS_beta_core"/>
</dbReference>
<dbReference type="InterPro" id="IPR002547">
    <property type="entry name" value="tRNA-bd_dom"/>
</dbReference>
<dbReference type="InterPro" id="IPR033714">
    <property type="entry name" value="tRNA_bind_bactPheRS"/>
</dbReference>
<dbReference type="InterPro" id="IPR005147">
    <property type="entry name" value="tRNA_synthase_B5-dom"/>
</dbReference>
<dbReference type="NCBIfam" id="TIGR00472">
    <property type="entry name" value="pheT_bact"/>
    <property type="match status" value="1"/>
</dbReference>
<dbReference type="NCBIfam" id="NF045760">
    <property type="entry name" value="YtpR"/>
    <property type="match status" value="1"/>
</dbReference>
<dbReference type="PANTHER" id="PTHR10947:SF0">
    <property type="entry name" value="PHENYLALANINE--TRNA LIGASE BETA SUBUNIT"/>
    <property type="match status" value="1"/>
</dbReference>
<dbReference type="PANTHER" id="PTHR10947">
    <property type="entry name" value="PHENYLALANYL-TRNA SYNTHETASE BETA CHAIN AND LEUCINE-RICH REPEAT-CONTAINING PROTEIN 47"/>
    <property type="match status" value="1"/>
</dbReference>
<dbReference type="Pfam" id="PF03483">
    <property type="entry name" value="B3_4"/>
    <property type="match status" value="1"/>
</dbReference>
<dbReference type="Pfam" id="PF03484">
    <property type="entry name" value="B5"/>
    <property type="match status" value="1"/>
</dbReference>
<dbReference type="Pfam" id="PF03147">
    <property type="entry name" value="FDX-ACB"/>
    <property type="match status" value="1"/>
</dbReference>
<dbReference type="Pfam" id="PF01588">
    <property type="entry name" value="tRNA_bind"/>
    <property type="match status" value="1"/>
</dbReference>
<dbReference type="Pfam" id="PF17759">
    <property type="entry name" value="tRNA_synthFbeta"/>
    <property type="match status" value="1"/>
</dbReference>
<dbReference type="SMART" id="SM00873">
    <property type="entry name" value="B3_4"/>
    <property type="match status" value="1"/>
</dbReference>
<dbReference type="SMART" id="SM00874">
    <property type="entry name" value="B5"/>
    <property type="match status" value="1"/>
</dbReference>
<dbReference type="SMART" id="SM00896">
    <property type="entry name" value="FDX-ACB"/>
    <property type="match status" value="1"/>
</dbReference>
<dbReference type="SUPFAM" id="SSF54991">
    <property type="entry name" value="Anticodon-binding domain of PheRS"/>
    <property type="match status" value="1"/>
</dbReference>
<dbReference type="SUPFAM" id="SSF55681">
    <property type="entry name" value="Class II aaRS and biotin synthetases"/>
    <property type="match status" value="1"/>
</dbReference>
<dbReference type="SUPFAM" id="SSF50249">
    <property type="entry name" value="Nucleic acid-binding proteins"/>
    <property type="match status" value="1"/>
</dbReference>
<dbReference type="SUPFAM" id="SSF56037">
    <property type="entry name" value="PheT/TilS domain"/>
    <property type="match status" value="1"/>
</dbReference>
<dbReference type="SUPFAM" id="SSF46955">
    <property type="entry name" value="Putative DNA-binding domain"/>
    <property type="match status" value="1"/>
</dbReference>
<dbReference type="PROSITE" id="PS51483">
    <property type="entry name" value="B5"/>
    <property type="match status" value="1"/>
</dbReference>
<dbReference type="PROSITE" id="PS51447">
    <property type="entry name" value="FDX_ACB"/>
    <property type="match status" value="1"/>
</dbReference>
<dbReference type="PROSITE" id="PS50886">
    <property type="entry name" value="TRBD"/>
    <property type="match status" value="1"/>
</dbReference>
<feature type="chain" id="PRO_0000126908" description="Phenylalanine--tRNA ligase beta subunit">
    <location>
        <begin position="1"/>
        <end position="802"/>
    </location>
</feature>
<feature type="domain" description="tRNA-binding" evidence="1">
    <location>
        <begin position="40"/>
        <end position="155"/>
    </location>
</feature>
<feature type="domain" description="B5" evidence="1">
    <location>
        <begin position="409"/>
        <end position="484"/>
    </location>
</feature>
<feature type="domain" description="FDX-ACB" evidence="1">
    <location>
        <begin position="709"/>
        <end position="802"/>
    </location>
</feature>
<feature type="binding site" evidence="1">
    <location>
        <position position="462"/>
    </location>
    <ligand>
        <name>Mg(2+)</name>
        <dbReference type="ChEBI" id="CHEBI:18420"/>
        <note>shared with alpha subunit</note>
    </ligand>
</feature>
<feature type="binding site" evidence="1">
    <location>
        <position position="468"/>
    </location>
    <ligand>
        <name>Mg(2+)</name>
        <dbReference type="ChEBI" id="CHEBI:18420"/>
        <note>shared with alpha subunit</note>
    </ligand>
</feature>
<feature type="binding site" evidence="1">
    <location>
        <position position="471"/>
    </location>
    <ligand>
        <name>Mg(2+)</name>
        <dbReference type="ChEBI" id="CHEBI:18420"/>
        <note>shared with alpha subunit</note>
    </ligand>
</feature>
<feature type="binding site" evidence="1">
    <location>
        <position position="472"/>
    </location>
    <ligand>
        <name>Mg(2+)</name>
        <dbReference type="ChEBI" id="CHEBI:18420"/>
        <note>shared with alpha subunit</note>
    </ligand>
</feature>
<keyword id="KW-0030">Aminoacyl-tRNA synthetase</keyword>
<keyword id="KW-0067">ATP-binding</keyword>
<keyword id="KW-0963">Cytoplasm</keyword>
<keyword id="KW-0436">Ligase</keyword>
<keyword id="KW-0460">Magnesium</keyword>
<keyword id="KW-0479">Metal-binding</keyword>
<keyword id="KW-0547">Nucleotide-binding</keyword>
<keyword id="KW-0648">Protein biosynthesis</keyword>
<keyword id="KW-1185">Reference proteome</keyword>
<keyword id="KW-0694">RNA-binding</keyword>
<keyword id="KW-0820">tRNA-binding</keyword>
<gene>
    <name evidence="1" type="primary">pheT</name>
    <name type="ordered locus">lmo1222</name>
</gene>
<protein>
    <recommendedName>
        <fullName evidence="1">Phenylalanine--tRNA ligase beta subunit</fullName>
        <ecNumber evidence="1">6.1.1.20</ecNumber>
    </recommendedName>
    <alternativeName>
        <fullName evidence="1">Phenylalanyl-tRNA synthetase beta subunit</fullName>
        <shortName evidence="1">PheRS</shortName>
    </alternativeName>
</protein>
<name>SYFB_LISMO</name>
<organism>
    <name type="scientific">Listeria monocytogenes serovar 1/2a (strain ATCC BAA-679 / EGD-e)</name>
    <dbReference type="NCBI Taxonomy" id="169963"/>
    <lineage>
        <taxon>Bacteria</taxon>
        <taxon>Bacillati</taxon>
        <taxon>Bacillota</taxon>
        <taxon>Bacilli</taxon>
        <taxon>Bacillales</taxon>
        <taxon>Listeriaceae</taxon>
        <taxon>Listeria</taxon>
    </lineage>
</organism>
<evidence type="ECO:0000255" key="1">
    <source>
        <dbReference type="HAMAP-Rule" id="MF_00283"/>
    </source>
</evidence>